<comment type="cofactor">
    <cofactor evidence="1">
        <name>Mg(2+)</name>
        <dbReference type="ChEBI" id="CHEBI:18420"/>
    </cofactor>
    <cofactor evidence="1">
        <name>Mn(2+)</name>
        <dbReference type="ChEBI" id="CHEBI:29035"/>
    </cofactor>
    <text evidence="1">Binds 2 magnesium or manganese ions per subunit.</text>
</comment>
<comment type="similarity">
    <text evidence="1">Belongs to the RimK family.</text>
</comment>
<keyword id="KW-0067">ATP-binding</keyword>
<keyword id="KW-0436">Ligase</keyword>
<keyword id="KW-0460">Magnesium</keyword>
<keyword id="KW-0464">Manganese</keyword>
<keyword id="KW-0479">Metal-binding</keyword>
<keyword id="KW-0547">Nucleotide-binding</keyword>
<keyword id="KW-0648">Protein biosynthesis</keyword>
<name>RIMK_PSEPW</name>
<gene>
    <name evidence="1" type="primary">rimK</name>
    <name type="ordered locus">PputW619_4964</name>
</gene>
<organism>
    <name type="scientific">Pseudomonas putida (strain W619)</name>
    <dbReference type="NCBI Taxonomy" id="390235"/>
    <lineage>
        <taxon>Bacteria</taxon>
        <taxon>Pseudomonadati</taxon>
        <taxon>Pseudomonadota</taxon>
        <taxon>Gammaproteobacteria</taxon>
        <taxon>Pseudomonadales</taxon>
        <taxon>Pseudomonadaceae</taxon>
        <taxon>Pseudomonas</taxon>
    </lineage>
</organism>
<protein>
    <recommendedName>
        <fullName evidence="1">Probable alpha-L-glutamate ligase</fullName>
        <ecNumber evidence="1">6.3.2.-</ecNumber>
    </recommendedName>
</protein>
<feature type="chain" id="PRO_1000146940" description="Probable alpha-L-glutamate ligase">
    <location>
        <begin position="1"/>
        <end position="301"/>
    </location>
</feature>
<feature type="domain" description="ATP-grasp" evidence="1">
    <location>
        <begin position="104"/>
        <end position="287"/>
    </location>
</feature>
<feature type="binding site" evidence="1">
    <location>
        <position position="141"/>
    </location>
    <ligand>
        <name>ATP</name>
        <dbReference type="ChEBI" id="CHEBI:30616"/>
    </ligand>
</feature>
<feature type="binding site" evidence="1">
    <location>
        <begin position="178"/>
        <end position="179"/>
    </location>
    <ligand>
        <name>ATP</name>
        <dbReference type="ChEBI" id="CHEBI:30616"/>
    </ligand>
</feature>
<feature type="binding site" evidence="1">
    <location>
        <position position="187"/>
    </location>
    <ligand>
        <name>ATP</name>
        <dbReference type="ChEBI" id="CHEBI:30616"/>
    </ligand>
</feature>
<feature type="binding site" evidence="1">
    <location>
        <begin position="211"/>
        <end position="213"/>
    </location>
    <ligand>
        <name>ATP</name>
        <dbReference type="ChEBI" id="CHEBI:30616"/>
    </ligand>
</feature>
<feature type="binding site" evidence="1">
    <location>
        <position position="248"/>
    </location>
    <ligand>
        <name>Mg(2+)</name>
        <dbReference type="ChEBI" id="CHEBI:18420"/>
        <label>1</label>
    </ligand>
</feature>
<feature type="binding site" evidence="1">
    <location>
        <position position="248"/>
    </location>
    <ligand>
        <name>Mn(2+)</name>
        <dbReference type="ChEBI" id="CHEBI:29035"/>
        <label>1</label>
    </ligand>
</feature>
<feature type="binding site" evidence="1">
    <location>
        <position position="260"/>
    </location>
    <ligand>
        <name>Mg(2+)</name>
        <dbReference type="ChEBI" id="CHEBI:18420"/>
        <label>1</label>
    </ligand>
</feature>
<feature type="binding site" evidence="1">
    <location>
        <position position="260"/>
    </location>
    <ligand>
        <name>Mg(2+)</name>
        <dbReference type="ChEBI" id="CHEBI:18420"/>
        <label>2</label>
    </ligand>
</feature>
<feature type="binding site" evidence="1">
    <location>
        <position position="260"/>
    </location>
    <ligand>
        <name>Mn(2+)</name>
        <dbReference type="ChEBI" id="CHEBI:29035"/>
        <label>1</label>
    </ligand>
</feature>
<feature type="binding site" evidence="1">
    <location>
        <position position="260"/>
    </location>
    <ligand>
        <name>Mn(2+)</name>
        <dbReference type="ChEBI" id="CHEBI:29035"/>
        <label>2</label>
    </ligand>
</feature>
<feature type="binding site" evidence="1">
    <location>
        <position position="262"/>
    </location>
    <ligand>
        <name>Mg(2+)</name>
        <dbReference type="ChEBI" id="CHEBI:18420"/>
        <label>2</label>
    </ligand>
</feature>
<feature type="binding site" evidence="1">
    <location>
        <position position="262"/>
    </location>
    <ligand>
        <name>Mn(2+)</name>
        <dbReference type="ChEBI" id="CHEBI:29035"/>
        <label>2</label>
    </ligand>
</feature>
<proteinExistence type="inferred from homology"/>
<dbReference type="EC" id="6.3.2.-" evidence="1"/>
<dbReference type="EMBL" id="CP000949">
    <property type="protein sequence ID" value="ACA75440.1"/>
    <property type="molecule type" value="Genomic_DNA"/>
</dbReference>
<dbReference type="SMR" id="B1JET8"/>
<dbReference type="STRING" id="390235.PputW619_4964"/>
<dbReference type="KEGG" id="ppw:PputW619_4964"/>
<dbReference type="eggNOG" id="COG0189">
    <property type="taxonomic scope" value="Bacteria"/>
</dbReference>
<dbReference type="HOGENOM" id="CLU_054353_0_1_6"/>
<dbReference type="OrthoDB" id="3865600at2"/>
<dbReference type="GO" id="GO:0005737">
    <property type="term" value="C:cytoplasm"/>
    <property type="evidence" value="ECO:0007669"/>
    <property type="project" value="TreeGrafter"/>
</dbReference>
<dbReference type="GO" id="GO:0005524">
    <property type="term" value="F:ATP binding"/>
    <property type="evidence" value="ECO:0007669"/>
    <property type="project" value="UniProtKB-UniRule"/>
</dbReference>
<dbReference type="GO" id="GO:0046872">
    <property type="term" value="F:metal ion binding"/>
    <property type="evidence" value="ECO:0007669"/>
    <property type="project" value="UniProtKB-KW"/>
</dbReference>
<dbReference type="GO" id="GO:0018169">
    <property type="term" value="F:ribosomal S6-glutamic acid ligase activity"/>
    <property type="evidence" value="ECO:0007669"/>
    <property type="project" value="TreeGrafter"/>
</dbReference>
<dbReference type="GO" id="GO:0036211">
    <property type="term" value="P:protein modification process"/>
    <property type="evidence" value="ECO:0007669"/>
    <property type="project" value="InterPro"/>
</dbReference>
<dbReference type="GO" id="GO:0009432">
    <property type="term" value="P:SOS response"/>
    <property type="evidence" value="ECO:0007669"/>
    <property type="project" value="TreeGrafter"/>
</dbReference>
<dbReference type="GO" id="GO:0006412">
    <property type="term" value="P:translation"/>
    <property type="evidence" value="ECO:0007669"/>
    <property type="project" value="UniProtKB-KW"/>
</dbReference>
<dbReference type="FunFam" id="3.40.50.20:FF:000004">
    <property type="entry name" value="Probable alpha-L-glutamate ligase"/>
    <property type="match status" value="1"/>
</dbReference>
<dbReference type="FunFam" id="3.30.1490.20:FF:000005">
    <property type="entry name" value="Probable alpha-L-glutamate ligase 1"/>
    <property type="match status" value="1"/>
</dbReference>
<dbReference type="FunFam" id="3.30.470.20:FF:000016">
    <property type="entry name" value="Ribosomal protein S6--L-glutamate ligase"/>
    <property type="match status" value="1"/>
</dbReference>
<dbReference type="Gene3D" id="3.40.50.20">
    <property type="match status" value="1"/>
</dbReference>
<dbReference type="Gene3D" id="3.30.1490.20">
    <property type="entry name" value="ATP-grasp fold, A domain"/>
    <property type="match status" value="1"/>
</dbReference>
<dbReference type="Gene3D" id="3.30.470.20">
    <property type="entry name" value="ATP-grasp fold, B domain"/>
    <property type="match status" value="1"/>
</dbReference>
<dbReference type="HAMAP" id="MF_01552">
    <property type="entry name" value="RimK"/>
    <property type="match status" value="1"/>
</dbReference>
<dbReference type="InterPro" id="IPR011761">
    <property type="entry name" value="ATP-grasp"/>
</dbReference>
<dbReference type="InterPro" id="IPR013651">
    <property type="entry name" value="ATP-grasp_RimK-type"/>
</dbReference>
<dbReference type="InterPro" id="IPR013815">
    <property type="entry name" value="ATP_grasp_subdomain_1"/>
</dbReference>
<dbReference type="InterPro" id="IPR023533">
    <property type="entry name" value="RimK"/>
</dbReference>
<dbReference type="InterPro" id="IPR041107">
    <property type="entry name" value="Rimk_N"/>
</dbReference>
<dbReference type="InterPro" id="IPR004666">
    <property type="entry name" value="Rp_bS6_RimK/Lys_biosynth_LsyX"/>
</dbReference>
<dbReference type="NCBIfam" id="NF007764">
    <property type="entry name" value="PRK10446.1"/>
    <property type="match status" value="1"/>
</dbReference>
<dbReference type="NCBIfam" id="TIGR00768">
    <property type="entry name" value="rimK_fam"/>
    <property type="match status" value="1"/>
</dbReference>
<dbReference type="PANTHER" id="PTHR21621:SF7">
    <property type="entry name" value="RIBOSOMAL PROTEIN BS6--L-GLUTAMATE LIGASE"/>
    <property type="match status" value="1"/>
</dbReference>
<dbReference type="PANTHER" id="PTHR21621">
    <property type="entry name" value="RIBOSOMAL PROTEIN S6 MODIFICATION PROTEIN"/>
    <property type="match status" value="1"/>
</dbReference>
<dbReference type="Pfam" id="PF08443">
    <property type="entry name" value="RimK"/>
    <property type="match status" value="1"/>
</dbReference>
<dbReference type="Pfam" id="PF18030">
    <property type="entry name" value="Rimk_N"/>
    <property type="match status" value="1"/>
</dbReference>
<dbReference type="SUPFAM" id="SSF56059">
    <property type="entry name" value="Glutathione synthetase ATP-binding domain-like"/>
    <property type="match status" value="1"/>
</dbReference>
<dbReference type="PROSITE" id="PS50975">
    <property type="entry name" value="ATP_GRASP"/>
    <property type="match status" value="1"/>
</dbReference>
<evidence type="ECO:0000255" key="1">
    <source>
        <dbReference type="HAMAP-Rule" id="MF_01552"/>
    </source>
</evidence>
<reference key="1">
    <citation type="submission" date="2008-02" db="EMBL/GenBank/DDBJ databases">
        <title>Complete sequence of Pseudomonas putida W619.</title>
        <authorList>
            <person name="Copeland A."/>
            <person name="Lucas S."/>
            <person name="Lapidus A."/>
            <person name="Barry K."/>
            <person name="Detter J.C."/>
            <person name="Glavina del Rio T."/>
            <person name="Dalin E."/>
            <person name="Tice H."/>
            <person name="Pitluck S."/>
            <person name="Chain P."/>
            <person name="Malfatti S."/>
            <person name="Shin M."/>
            <person name="Vergez L."/>
            <person name="Schmutz J."/>
            <person name="Larimer F."/>
            <person name="Land M."/>
            <person name="Hauser L."/>
            <person name="Kyrpides N."/>
            <person name="Kim E."/>
            <person name="Taghavi S."/>
            <person name="Vangronsveld D."/>
            <person name="van der Lelie D."/>
            <person name="Richardson P."/>
        </authorList>
    </citation>
    <scope>NUCLEOTIDE SEQUENCE [LARGE SCALE GENOMIC DNA]</scope>
    <source>
        <strain>W619</strain>
    </source>
</reference>
<sequence>MKIAVLSRNPRLYSTRRLVEAGTQRGHEMVVIDTLRAYMNIASHKPQIHYRGKPLEGFDAVIPRIGASVTFYGCAVLRQFEMMGVYPLNESVAIARSRDKLRSLQLLSRRGIGLPITGFAHSPDDIPDLIQMVNGAPLVIKVLEGTQGIGVVLCETTQAAESVIEAFMGLKQNIMVQEYIKEAGGADIRCFVVGDKVIASMKRQAKPGEFRSNLHRGGVASLIKITPEERITAIRAAKVMGLSVAGVDILRSNHGPLVMEVNSSPGLEGIEVTTGKNVAGMIIEHLEKNGGPNQTRTKGKG</sequence>
<accession>B1JET8</accession>